<reference key="1">
    <citation type="journal article" date="1998" name="J. Exp. Med.">
        <title>Epstein-Barr virus-induced molecule 1 ligand chemokine is expressed by dendritic cells in lymphoid tissues and strongly attracts naive T cells and activated B cells.</title>
        <authorList>
            <person name="Ngo V.N."/>
            <person name="Tang H.L."/>
            <person name="Cyster J.G."/>
        </authorList>
    </citation>
    <scope>NUCLEOTIDE SEQUENCE [MRNA]</scope>
    <scope>CHARACTERIZATION</scope>
    <source>
        <tissue>Lymphoid tissue</tissue>
    </source>
</reference>
<reference key="2">
    <citation type="journal article" date="2004" name="Genome Res.">
        <title>The status, quality, and expansion of the NIH full-length cDNA project: the Mammalian Gene Collection (MGC).</title>
        <authorList>
            <consortium name="The MGC Project Team"/>
        </authorList>
    </citation>
    <scope>NUCLEOTIDE SEQUENCE [LARGE SCALE MRNA]</scope>
    <source>
        <strain>C57BL/6J</strain>
        <tissue>Mammary gland</tissue>
    </source>
</reference>
<protein>
    <recommendedName>
        <fullName>C-C motif chemokine 19</fullName>
    </recommendedName>
    <alternativeName>
        <fullName>Epstein-Barr virus-induced molecule 1 ligand chemokine</fullName>
        <shortName>EBI1 ligand chemokine</shortName>
        <shortName>ELC</shortName>
    </alternativeName>
    <alternativeName>
        <fullName>Small-inducible cytokine A19</fullName>
    </alternativeName>
</protein>
<accession>O70460</accession>
<name>CCL19_MOUSE</name>
<feature type="signal peptide" evidence="3">
    <location>
        <begin position="1"/>
        <end position="25"/>
    </location>
</feature>
<feature type="chain" id="PRO_0000005215" description="C-C motif chemokine 19">
    <location>
        <begin position="26"/>
        <end position="108"/>
    </location>
</feature>
<feature type="glycosylation site" description="N-linked (GlcNAc...) asparagine" evidence="3">
    <location>
        <position position="100"/>
    </location>
</feature>
<feature type="disulfide bond" evidence="1">
    <location>
        <begin position="33"/>
        <end position="59"/>
    </location>
</feature>
<feature type="disulfide bond" evidence="1">
    <location>
        <begin position="34"/>
        <end position="75"/>
    </location>
</feature>
<comment type="function">
    <text>Strongly chemotactic for naive (L-selectinhi) CD4 T-cells and for CD8 T-cells and weakly attractive for resting B-cells and memory (L-selectinlo) CD4 T-cells. May play a role in promoting encounters between recirculating T-cells and dendritic cells and in the migration of activated B-cells into the T-zone of secondary lymphoid tissues. Binds to chemokine receptor CCR7. Binds to atypical chemokine receptor ACKR4 and mediates the recruitment of beta-arrestin (ARRB1/2) to ACKR4.</text>
</comment>
<comment type="subunit">
    <text evidence="2">Interacts with TNFAIP6 (via Link domain).</text>
</comment>
<comment type="subcellular location">
    <subcellularLocation>
        <location>Secreted</location>
    </subcellularLocation>
</comment>
<comment type="tissue specificity">
    <text>Highly expressed by dendritic cells in mesenteric and peripheral lymph nodes. Significant expression in spleen (T cell zone or periarteriolar lymphatic sheath) and Peyer patches. Low expression in thymus.</text>
</comment>
<comment type="similarity">
    <text evidence="4">Belongs to the intercrine beta (chemokine CC) family.</text>
</comment>
<proteinExistence type="evidence at protein level"/>
<organism>
    <name type="scientific">Mus musculus</name>
    <name type="common">Mouse</name>
    <dbReference type="NCBI Taxonomy" id="10090"/>
    <lineage>
        <taxon>Eukaryota</taxon>
        <taxon>Metazoa</taxon>
        <taxon>Chordata</taxon>
        <taxon>Craniata</taxon>
        <taxon>Vertebrata</taxon>
        <taxon>Euteleostomi</taxon>
        <taxon>Mammalia</taxon>
        <taxon>Eutheria</taxon>
        <taxon>Euarchontoglires</taxon>
        <taxon>Glires</taxon>
        <taxon>Rodentia</taxon>
        <taxon>Myomorpha</taxon>
        <taxon>Muroidea</taxon>
        <taxon>Muridae</taxon>
        <taxon>Murinae</taxon>
        <taxon>Mus</taxon>
        <taxon>Mus</taxon>
    </lineage>
</organism>
<dbReference type="EMBL" id="AF059208">
    <property type="protein sequence ID" value="AAC14661.1"/>
    <property type="molecule type" value="mRNA"/>
</dbReference>
<dbReference type="EMBL" id="BC051472">
    <property type="protein sequence ID" value="AAH51472.1"/>
    <property type="molecule type" value="mRNA"/>
</dbReference>
<dbReference type="CCDS" id="CCDS18080.1"/>
<dbReference type="RefSeq" id="NP_036018.1">
    <property type="nucleotide sequence ID" value="NM_011888.4"/>
</dbReference>
<dbReference type="RefSeq" id="XP_001472218.1">
    <property type="nucleotide sequence ID" value="XM_001472168.6"/>
</dbReference>
<dbReference type="SMR" id="O70460"/>
<dbReference type="DIP" id="DIP-5920N"/>
<dbReference type="FunCoup" id="O70460">
    <property type="interactions" value="641"/>
</dbReference>
<dbReference type="STRING" id="10090.ENSMUSP00000100022"/>
<dbReference type="GlyCosmos" id="O70460">
    <property type="glycosylation" value="1 site, No reported glycans"/>
</dbReference>
<dbReference type="GlyGen" id="O70460">
    <property type="glycosylation" value="1 site"/>
</dbReference>
<dbReference type="iPTMnet" id="O70460"/>
<dbReference type="PhosphoSitePlus" id="O70460"/>
<dbReference type="PaxDb" id="10090-ENSMUSP00000100022"/>
<dbReference type="Antibodypedia" id="11384">
    <property type="antibodies" value="514 antibodies from 33 providers"/>
</dbReference>
<dbReference type="DNASU" id="24047"/>
<dbReference type="Ensembl" id="ENSMUST00000102957.6">
    <property type="protein sequence ID" value="ENSMUSP00000100022.4"/>
    <property type="gene ID" value="ENSMUSG00000071005.8"/>
</dbReference>
<dbReference type="GeneID" id="24047"/>
<dbReference type="KEGG" id="mmu:24047"/>
<dbReference type="UCSC" id="uc008snx.1">
    <property type="organism name" value="mouse"/>
</dbReference>
<dbReference type="AGR" id="MGI:1346316"/>
<dbReference type="CTD" id="6363"/>
<dbReference type="MGI" id="MGI:1346316">
    <property type="gene designation" value="Ccl19"/>
</dbReference>
<dbReference type="VEuPathDB" id="HostDB:ENSMUSG00000071005"/>
<dbReference type="VEuPathDB" id="HostDB:ENSMUSG00000094661"/>
<dbReference type="eggNOG" id="ENOG502SENW">
    <property type="taxonomic scope" value="Eukaryota"/>
</dbReference>
<dbReference type="GeneTree" id="ENSGT01130000278316"/>
<dbReference type="HOGENOM" id="CLU_141716_3_1_1"/>
<dbReference type="InParanoid" id="O70460"/>
<dbReference type="OMA" id="GHELCAP"/>
<dbReference type="OrthoDB" id="61780at9989"/>
<dbReference type="PhylomeDB" id="O70460"/>
<dbReference type="TreeFam" id="TF334888"/>
<dbReference type="Reactome" id="R-MMU-380108">
    <property type="pathway name" value="Chemokine receptors bind chemokines"/>
</dbReference>
<dbReference type="Reactome" id="R-MMU-418594">
    <property type="pathway name" value="G alpha (i) signalling events"/>
</dbReference>
<dbReference type="BioGRID-ORCS" id="24047">
    <property type="hits" value="3 hits in 38 CRISPR screens"/>
</dbReference>
<dbReference type="ChiTaRS" id="Myl4">
    <property type="organism name" value="mouse"/>
</dbReference>
<dbReference type="PRO" id="PR:O70460"/>
<dbReference type="Proteomes" id="UP000000589">
    <property type="component" value="Chromosome 4"/>
</dbReference>
<dbReference type="RNAct" id="O70460">
    <property type="molecule type" value="protein"/>
</dbReference>
<dbReference type="Bgee" id="ENSMUSG00000071005">
    <property type="expression patterns" value="Expressed in spleen and 46 other cell types or tissues"/>
</dbReference>
<dbReference type="ExpressionAtlas" id="O70460">
    <property type="expression patterns" value="baseline and differential"/>
</dbReference>
<dbReference type="GO" id="GO:0009897">
    <property type="term" value="C:external side of plasma membrane"/>
    <property type="evidence" value="ECO:0000314"/>
    <property type="project" value="MGI"/>
</dbReference>
<dbReference type="GO" id="GO:0005615">
    <property type="term" value="C:extracellular space"/>
    <property type="evidence" value="ECO:0007669"/>
    <property type="project" value="UniProtKB-KW"/>
</dbReference>
<dbReference type="GO" id="GO:0031732">
    <property type="term" value="F:CCR7 chemokine receptor binding"/>
    <property type="evidence" value="ECO:0000353"/>
    <property type="project" value="BHF-UCL"/>
</dbReference>
<dbReference type="GO" id="GO:0008009">
    <property type="term" value="F:chemokine activity"/>
    <property type="evidence" value="ECO:0000314"/>
    <property type="project" value="BHF-UCL"/>
</dbReference>
<dbReference type="GO" id="GO:0042379">
    <property type="term" value="F:chemokine receptor binding"/>
    <property type="evidence" value="ECO:0000250"/>
    <property type="project" value="UniProtKB"/>
</dbReference>
<dbReference type="GO" id="GO:0038119">
    <property type="term" value="P:CCL19-activated CCR7 signaling pathway"/>
    <property type="evidence" value="ECO:0000314"/>
    <property type="project" value="BHF-UCL"/>
</dbReference>
<dbReference type="GO" id="GO:0048469">
    <property type="term" value="P:cell maturation"/>
    <property type="evidence" value="ECO:0000314"/>
    <property type="project" value="BHF-UCL"/>
</dbReference>
<dbReference type="GO" id="GO:0071380">
    <property type="term" value="P:cellular response to prostaglandin E stimulus"/>
    <property type="evidence" value="ECO:0000250"/>
    <property type="project" value="BHF-UCL"/>
</dbReference>
<dbReference type="GO" id="GO:0002407">
    <property type="term" value="P:dendritic cell chemotaxis"/>
    <property type="evidence" value="ECO:0000314"/>
    <property type="project" value="BHF-UCL"/>
</dbReference>
<dbReference type="GO" id="GO:0001768">
    <property type="term" value="P:establishment of T cell polarity"/>
    <property type="evidence" value="ECO:0000250"/>
    <property type="project" value="BHF-UCL"/>
</dbReference>
<dbReference type="GO" id="GO:0006955">
    <property type="term" value="P:immune response"/>
    <property type="evidence" value="ECO:0007669"/>
    <property type="project" value="InterPro"/>
</dbReference>
<dbReference type="GO" id="GO:0001771">
    <property type="term" value="P:immunological synapse formation"/>
    <property type="evidence" value="ECO:0000314"/>
    <property type="project" value="BHF-UCL"/>
</dbReference>
<dbReference type="GO" id="GO:0006954">
    <property type="term" value="P:inflammatory response"/>
    <property type="evidence" value="ECO:0007669"/>
    <property type="project" value="UniProtKB-KW"/>
</dbReference>
<dbReference type="GO" id="GO:0097029">
    <property type="term" value="P:mature conventional dendritic cell differentiation"/>
    <property type="evidence" value="ECO:0000314"/>
    <property type="project" value="BHF-UCL"/>
</dbReference>
<dbReference type="GO" id="GO:0002408">
    <property type="term" value="P:myeloid dendritic cell chemotaxis"/>
    <property type="evidence" value="ECO:0000250"/>
    <property type="project" value="BHF-UCL"/>
</dbReference>
<dbReference type="GO" id="GO:2000669">
    <property type="term" value="P:negative regulation of dendritic cell apoptotic process"/>
    <property type="evidence" value="ECO:0000250"/>
    <property type="project" value="BHF-UCL"/>
</dbReference>
<dbReference type="GO" id="GO:0043123">
    <property type="term" value="P:positive regulation of canonical NF-kappaB signal transduction"/>
    <property type="evidence" value="ECO:0000250"/>
    <property type="project" value="BHF-UCL"/>
</dbReference>
<dbReference type="GO" id="GO:2000147">
    <property type="term" value="P:positive regulation of cell motility"/>
    <property type="evidence" value="ECO:0000250"/>
    <property type="project" value="BHF-UCL"/>
</dbReference>
<dbReference type="GO" id="GO:0050921">
    <property type="term" value="P:positive regulation of chemotaxis"/>
    <property type="evidence" value="ECO:0000314"/>
    <property type="project" value="BHF-UCL"/>
</dbReference>
<dbReference type="GO" id="GO:0002606">
    <property type="term" value="P:positive regulation of dendritic cell antigen processing and presentation"/>
    <property type="evidence" value="ECO:0000315"/>
    <property type="project" value="BHF-UCL"/>
</dbReference>
<dbReference type="GO" id="GO:2000549">
    <property type="term" value="P:positive regulation of dendritic cell dendrite assembly"/>
    <property type="evidence" value="ECO:0000314"/>
    <property type="project" value="BHF-UCL"/>
</dbReference>
<dbReference type="GO" id="GO:0045807">
    <property type="term" value="P:positive regulation of endocytosis"/>
    <property type="evidence" value="ECO:0000314"/>
    <property type="project" value="BHF-UCL"/>
</dbReference>
<dbReference type="GO" id="GO:0070374">
    <property type="term" value="P:positive regulation of ERK1 and ERK2 cascade"/>
    <property type="evidence" value="ECO:0000250"/>
    <property type="project" value="BHF-UCL"/>
</dbReference>
<dbReference type="GO" id="GO:0010560">
    <property type="term" value="P:positive regulation of glycoprotein biosynthetic process"/>
    <property type="evidence" value="ECO:0000314"/>
    <property type="project" value="BHF-UCL"/>
</dbReference>
<dbReference type="GO" id="GO:0032731">
    <property type="term" value="P:positive regulation of interleukin-1 beta production"/>
    <property type="evidence" value="ECO:0000314"/>
    <property type="project" value="BHF-UCL"/>
</dbReference>
<dbReference type="GO" id="GO:0032735">
    <property type="term" value="P:positive regulation of interleukin-12 production"/>
    <property type="evidence" value="ECO:0000314"/>
    <property type="project" value="BHF-UCL"/>
</dbReference>
<dbReference type="GO" id="GO:0046330">
    <property type="term" value="P:positive regulation of JNK cascade"/>
    <property type="evidence" value="ECO:0000314"/>
    <property type="project" value="BHF-UCL"/>
</dbReference>
<dbReference type="GO" id="GO:0090023">
    <property type="term" value="P:positive regulation of neutrophil chemotaxis"/>
    <property type="evidence" value="ECO:0000250"/>
    <property type="project" value="BHF-UCL"/>
</dbReference>
<dbReference type="GO" id="GO:1901224">
    <property type="term" value="P:positive regulation of non-canonical NF-kappaB signal transduction"/>
    <property type="evidence" value="ECO:0000250"/>
    <property type="project" value="BHF-UCL"/>
</dbReference>
<dbReference type="GO" id="GO:0051897">
    <property type="term" value="P:positive regulation of phosphatidylinositol 3-kinase/protein kinase B signal transduction"/>
    <property type="evidence" value="ECO:0000250"/>
    <property type="project" value="BHF-UCL"/>
</dbReference>
<dbReference type="GO" id="GO:0035022">
    <property type="term" value="P:positive regulation of Rac protein signal transduction"/>
    <property type="evidence" value="ECO:0000314"/>
    <property type="project" value="BHF-UCL"/>
</dbReference>
<dbReference type="GO" id="GO:0048260">
    <property type="term" value="P:positive regulation of receptor-mediated endocytosis"/>
    <property type="evidence" value="ECO:0000314"/>
    <property type="project" value="BHF-UCL"/>
</dbReference>
<dbReference type="GO" id="GO:0042102">
    <property type="term" value="P:positive regulation of T cell proliferation"/>
    <property type="evidence" value="ECO:0000314"/>
    <property type="project" value="BHF-UCL"/>
</dbReference>
<dbReference type="GO" id="GO:0045627">
    <property type="term" value="P:positive regulation of T-helper 1 cell differentiation"/>
    <property type="evidence" value="ECO:0000314"/>
    <property type="project" value="BHF-UCL"/>
</dbReference>
<dbReference type="GO" id="GO:0032760">
    <property type="term" value="P:positive regulation of tumor necrosis factor production"/>
    <property type="evidence" value="ECO:0000314"/>
    <property type="project" value="BHF-UCL"/>
</dbReference>
<dbReference type="GO" id="GO:0032489">
    <property type="term" value="P:regulation of Cdc42 protein signal transduction"/>
    <property type="evidence" value="ECO:0000314"/>
    <property type="project" value="BHF-UCL"/>
</dbReference>
<dbReference type="GO" id="GO:0060491">
    <property type="term" value="P:regulation of cell projection assembly"/>
    <property type="evidence" value="ECO:0000314"/>
    <property type="project" value="BHF-UCL"/>
</dbReference>
<dbReference type="GO" id="GO:0051209">
    <property type="term" value="P:release of sequestered calcium ion into cytosol"/>
    <property type="evidence" value="ECO:0000250"/>
    <property type="project" value="BHF-UCL"/>
</dbReference>
<dbReference type="GO" id="GO:0071731">
    <property type="term" value="P:response to nitric oxide"/>
    <property type="evidence" value="ECO:0000250"/>
    <property type="project" value="BHF-UCL"/>
</dbReference>
<dbReference type="GO" id="GO:0031295">
    <property type="term" value="P:T cell costimulation"/>
    <property type="evidence" value="ECO:0000314"/>
    <property type="project" value="BHF-UCL"/>
</dbReference>
<dbReference type="CDD" id="cd01119">
    <property type="entry name" value="Chemokine_CC_DCCL"/>
    <property type="match status" value="1"/>
</dbReference>
<dbReference type="FunFam" id="2.40.50.40:FF:000012">
    <property type="entry name" value="C-C motif chemokine"/>
    <property type="match status" value="1"/>
</dbReference>
<dbReference type="Gene3D" id="2.40.50.40">
    <property type="match status" value="1"/>
</dbReference>
<dbReference type="InterPro" id="IPR039809">
    <property type="entry name" value="Chemokine_b/g/d"/>
</dbReference>
<dbReference type="InterPro" id="IPR000827">
    <property type="entry name" value="Chemokine_CC_CS"/>
</dbReference>
<dbReference type="InterPro" id="IPR034133">
    <property type="entry name" value="Chemokine_CC_DCCL"/>
</dbReference>
<dbReference type="InterPro" id="IPR001811">
    <property type="entry name" value="Chemokine_IL8-like_dom"/>
</dbReference>
<dbReference type="InterPro" id="IPR036048">
    <property type="entry name" value="Interleukin_8-like_sf"/>
</dbReference>
<dbReference type="PANTHER" id="PTHR12015:SF80">
    <property type="entry name" value="C-C MOTIF CHEMOKINE 19"/>
    <property type="match status" value="1"/>
</dbReference>
<dbReference type="PANTHER" id="PTHR12015">
    <property type="entry name" value="SMALL INDUCIBLE CYTOKINE A"/>
    <property type="match status" value="1"/>
</dbReference>
<dbReference type="Pfam" id="PF00048">
    <property type="entry name" value="IL8"/>
    <property type="match status" value="1"/>
</dbReference>
<dbReference type="SMART" id="SM00199">
    <property type="entry name" value="SCY"/>
    <property type="match status" value="1"/>
</dbReference>
<dbReference type="SUPFAM" id="SSF54117">
    <property type="entry name" value="Interleukin 8-like chemokines"/>
    <property type="match status" value="1"/>
</dbReference>
<dbReference type="PROSITE" id="PS00472">
    <property type="entry name" value="SMALL_CYTOKINES_CC"/>
    <property type="match status" value="1"/>
</dbReference>
<sequence>MAPRVTPLLAFSLLVLWTFPAPTLGGANDAEDCCLSVTQRPIPGNIVKAFRYLLNEDGCRVPAVVFTTLRGYQLCAPPDQPWVDRIIRRLKKSSAKNKGNSTRRSPVS</sequence>
<gene>
    <name type="primary">Ccl19</name>
    <name type="synonym">Elc</name>
    <name type="synonym">Scya19</name>
</gene>
<evidence type="ECO:0000250" key="1"/>
<evidence type="ECO:0000250" key="2">
    <source>
        <dbReference type="UniProtKB" id="Q99731"/>
    </source>
</evidence>
<evidence type="ECO:0000255" key="3"/>
<evidence type="ECO:0000305" key="4"/>
<keyword id="KW-0145">Chemotaxis</keyword>
<keyword id="KW-0202">Cytokine</keyword>
<keyword id="KW-1015">Disulfide bond</keyword>
<keyword id="KW-0325">Glycoprotein</keyword>
<keyword id="KW-0395">Inflammatory response</keyword>
<keyword id="KW-1185">Reference proteome</keyword>
<keyword id="KW-0964">Secreted</keyword>
<keyword id="KW-0732">Signal</keyword>